<dbReference type="EC" id="1.5.1.42" evidence="1"/>
<dbReference type="EMBL" id="AM946981">
    <property type="protein sequence ID" value="CAQ31534.1"/>
    <property type="molecule type" value="Genomic_DNA"/>
</dbReference>
<dbReference type="EMBL" id="CP001665">
    <property type="protein sequence ID" value="ACT29609.1"/>
    <property type="molecule type" value="Genomic_DNA"/>
</dbReference>
<dbReference type="EMBL" id="CP001509">
    <property type="protein sequence ID" value="ACT42905.1"/>
    <property type="molecule type" value="Genomic_DNA"/>
</dbReference>
<dbReference type="RefSeq" id="WP_001028095.1">
    <property type="nucleotide sequence ID" value="NZ_JADXDS010000001.1"/>
</dbReference>
<dbReference type="SMR" id="C6EHK0"/>
<dbReference type="GeneID" id="75171083"/>
<dbReference type="KEGG" id="ebd:ECBD_2587"/>
<dbReference type="KEGG" id="ebe:B21_01017"/>
<dbReference type="KEGG" id="ebl:ECD_01010"/>
<dbReference type="PATRIC" id="fig|469008.15.peg.1032"/>
<dbReference type="eggNOG" id="COG1853">
    <property type="taxonomic scope" value="Bacteria"/>
</dbReference>
<dbReference type="HOGENOM" id="CLU_059021_2_2_6"/>
<dbReference type="GO" id="GO:0010181">
    <property type="term" value="F:FMN binding"/>
    <property type="evidence" value="ECO:0007669"/>
    <property type="project" value="InterPro"/>
</dbReference>
<dbReference type="GO" id="GO:0052874">
    <property type="term" value="F:FMN reductase (NADH) activity"/>
    <property type="evidence" value="ECO:0007669"/>
    <property type="project" value="UniProtKB-EC"/>
</dbReference>
<dbReference type="GO" id="GO:0008752">
    <property type="term" value="F:FMN reductase [NAD(P)H] activity"/>
    <property type="evidence" value="ECO:0007669"/>
    <property type="project" value="InterPro"/>
</dbReference>
<dbReference type="GO" id="GO:0042602">
    <property type="term" value="F:riboflavin reductase (NADPH) activity"/>
    <property type="evidence" value="ECO:0007669"/>
    <property type="project" value="UniProtKB-UniRule"/>
</dbReference>
<dbReference type="GO" id="GO:0019740">
    <property type="term" value="P:nitrogen utilization"/>
    <property type="evidence" value="ECO:0007669"/>
    <property type="project" value="UniProtKB-UniRule"/>
</dbReference>
<dbReference type="GO" id="GO:0006212">
    <property type="term" value="P:uracil catabolic process"/>
    <property type="evidence" value="ECO:0007669"/>
    <property type="project" value="UniProtKB-UniRule"/>
</dbReference>
<dbReference type="FunFam" id="2.30.110.10:FF:000002">
    <property type="entry name" value="FMN reductase (NADH) RutF"/>
    <property type="match status" value="1"/>
</dbReference>
<dbReference type="Gene3D" id="2.30.110.10">
    <property type="entry name" value="Electron Transport, Fmn-binding Protein, Chain A"/>
    <property type="match status" value="1"/>
</dbReference>
<dbReference type="HAMAP" id="MF_00833">
    <property type="entry name" value="RutF"/>
    <property type="match status" value="1"/>
</dbReference>
<dbReference type="InterPro" id="IPR002563">
    <property type="entry name" value="Flavin_Rdtase-like_dom"/>
</dbReference>
<dbReference type="InterPro" id="IPR050268">
    <property type="entry name" value="NADH-dep_flavin_reductase"/>
</dbReference>
<dbReference type="InterPro" id="IPR019917">
    <property type="entry name" value="RutF"/>
</dbReference>
<dbReference type="InterPro" id="IPR012349">
    <property type="entry name" value="Split_barrel_FMN-bd"/>
</dbReference>
<dbReference type="NCBIfam" id="TIGR03615">
    <property type="entry name" value="RutF"/>
    <property type="match status" value="1"/>
</dbReference>
<dbReference type="PANTHER" id="PTHR30466">
    <property type="entry name" value="FLAVIN REDUCTASE"/>
    <property type="match status" value="1"/>
</dbReference>
<dbReference type="PANTHER" id="PTHR30466:SF1">
    <property type="entry name" value="FMN REDUCTASE (NADH) RUTF"/>
    <property type="match status" value="1"/>
</dbReference>
<dbReference type="Pfam" id="PF01613">
    <property type="entry name" value="Flavin_Reduct"/>
    <property type="match status" value="1"/>
</dbReference>
<dbReference type="SMART" id="SM00903">
    <property type="entry name" value="Flavin_Reduct"/>
    <property type="match status" value="1"/>
</dbReference>
<dbReference type="SUPFAM" id="SSF50475">
    <property type="entry name" value="FMN-binding split barrel"/>
    <property type="match status" value="1"/>
</dbReference>
<feature type="chain" id="PRO_0000403001" description="FMN reductase (NADH) RutF">
    <location>
        <begin position="1"/>
        <end position="164"/>
    </location>
</feature>
<accession>C6EHK0</accession>
<accession>C5W2W6</accession>
<comment type="function">
    <text evidence="1">Catalyzes the reduction of FMN to FMNH2 which is used to reduce pyrimidine by RutA via the Rut pathway.</text>
</comment>
<comment type="catalytic activity">
    <reaction evidence="1">
        <text>FMNH2 + NAD(+) = FMN + NADH + 2 H(+)</text>
        <dbReference type="Rhea" id="RHEA:21620"/>
        <dbReference type="ChEBI" id="CHEBI:15378"/>
        <dbReference type="ChEBI" id="CHEBI:57540"/>
        <dbReference type="ChEBI" id="CHEBI:57618"/>
        <dbReference type="ChEBI" id="CHEBI:57945"/>
        <dbReference type="ChEBI" id="CHEBI:58210"/>
        <dbReference type="EC" id="1.5.1.42"/>
    </reaction>
</comment>
<comment type="induction">
    <text evidence="1">Up-regulated by the nitrogen regulatory protein C (NtrC also called GlnG) and repressed by RutR.</text>
</comment>
<comment type="similarity">
    <text evidence="1">Belongs to the non-flavoprotein flavin reductase family. RutF subfamily.</text>
</comment>
<protein>
    <recommendedName>
        <fullName evidence="1">FMN reductase (NADH) RutF</fullName>
        <ecNumber evidence="1">1.5.1.42</ecNumber>
    </recommendedName>
    <alternativeName>
        <fullName evidence="1">FMN reductase</fullName>
    </alternativeName>
    <alternativeName>
        <fullName evidence="1">NADH-flavin reductase RutF</fullName>
    </alternativeName>
    <alternativeName>
        <fullName evidence="1">NADH:flavin oxidoreductase</fullName>
    </alternativeName>
</protein>
<sequence length="164" mass="17747">MNIVDQQTFRDAMSCMGAAVNIITTDGPAGRAGFTASAVCSVTDTPPTLLVCLNRGASVWPVFNENRTLCVNTLSAGQEPLSNLFGGKTPMEHRFAAARWQTGVTGCPQLEEALVSFDCRISQVVSVGTHDILFCAIEAIHRHATPYGLVWFDRSYHALMRPAC</sequence>
<reference key="1">
    <citation type="submission" date="2009-06" db="EMBL/GenBank/DDBJ databases">
        <title>Sequencing and gene expression analysis of Escherichia coli BL21.</title>
        <authorList>
            <person name="Leparc G."/>
            <person name="Striedner G."/>
            <person name="Bayer K."/>
            <person name="Kreil D."/>
            <person name="Krempl P.M."/>
        </authorList>
    </citation>
    <scope>NUCLEOTIDE SEQUENCE [LARGE SCALE GENOMIC DNA]</scope>
    <source>
        <strain>B / BL21-DE3</strain>
    </source>
</reference>
<reference key="2">
    <citation type="submission" date="2009-07" db="EMBL/GenBank/DDBJ databases">
        <title>Complete sequence of Escherichia coli BL21(DE3).</title>
        <authorList>
            <person name="Lucas S."/>
            <person name="Copeland A."/>
            <person name="Lapidus A."/>
            <person name="Glavina del Rio T."/>
            <person name="Dalin E."/>
            <person name="Tice H."/>
            <person name="Bruce D."/>
            <person name="Goodwin L."/>
            <person name="Pitluck S."/>
            <person name="LaButti K.M."/>
            <person name="Clum A."/>
            <person name="Larimer F."/>
            <person name="Land M."/>
            <person name="Hauser L."/>
            <person name="Kyrpides N."/>
            <person name="Anderson I."/>
            <person name="Sorek R."/>
            <person name="Rubin E."/>
        </authorList>
    </citation>
    <scope>NUCLEOTIDE SEQUENCE [LARGE SCALE GENOMIC DNA]</scope>
    <source>
        <strain>B / BL21-DE3</strain>
    </source>
</reference>
<reference key="3">
    <citation type="journal article" date="2009" name="J. Mol. Biol.">
        <title>Genome sequences of Escherichia coli B strains REL606 and BL21(DE3).</title>
        <authorList>
            <person name="Jeong H."/>
            <person name="Barbe V."/>
            <person name="Lee C.H."/>
            <person name="Vallenet D."/>
            <person name="Yu D.S."/>
            <person name="Choi S.H."/>
            <person name="Couloux A."/>
            <person name="Lee S.W."/>
            <person name="Yoon S.H."/>
            <person name="Cattolico L."/>
            <person name="Hur C.G."/>
            <person name="Park H.S."/>
            <person name="Segurens B."/>
            <person name="Kim S.C."/>
            <person name="Oh T.K."/>
            <person name="Lenski R.E."/>
            <person name="Studier F.W."/>
            <person name="Daegelen P."/>
            <person name="Kim J.F."/>
        </authorList>
    </citation>
    <scope>NUCLEOTIDE SEQUENCE [LARGE SCALE GENOMIC DNA]</scope>
    <source>
        <strain>B / BL21-DE3</strain>
    </source>
</reference>
<proteinExistence type="inferred from homology"/>
<evidence type="ECO:0000255" key="1">
    <source>
        <dbReference type="HAMAP-Rule" id="MF_00833"/>
    </source>
</evidence>
<organism>
    <name type="scientific">Escherichia coli (strain B / BL21-DE3)</name>
    <dbReference type="NCBI Taxonomy" id="469008"/>
    <lineage>
        <taxon>Bacteria</taxon>
        <taxon>Pseudomonadati</taxon>
        <taxon>Pseudomonadota</taxon>
        <taxon>Gammaproteobacteria</taxon>
        <taxon>Enterobacterales</taxon>
        <taxon>Enterobacteriaceae</taxon>
        <taxon>Escherichia</taxon>
    </lineage>
</organism>
<gene>
    <name evidence="1" type="primary">rutF</name>
    <name type="ordered locus">ECBD_2587</name>
    <name type="ordered locus">ECD_01010</name>
    <name type="ordered locus">B21_01017</name>
</gene>
<name>RUTF_ECOBD</name>
<keyword id="KW-0285">Flavoprotein</keyword>
<keyword id="KW-0288">FMN</keyword>
<keyword id="KW-0520">NAD</keyword>
<keyword id="KW-0560">Oxidoreductase</keyword>